<proteinExistence type="evidence at protein level"/>
<dbReference type="EC" id="2.1.1.117"/>
<dbReference type="EMBL" id="D29809">
    <property type="protein sequence ID" value="BAA06192.1"/>
    <property type="molecule type" value="mRNA"/>
</dbReference>
<dbReference type="SMR" id="Q39522"/>
<dbReference type="KEGG" id="ag:BAA06192"/>
<dbReference type="BRENDA" id="2.1.1.117">
    <property type="organism ID" value="1610"/>
</dbReference>
<dbReference type="GO" id="GO:0030777">
    <property type="term" value="F:(S)-scoulerine 9-O-methyltransferase activity"/>
    <property type="evidence" value="ECO:0007669"/>
    <property type="project" value="UniProtKB-EC"/>
</dbReference>
<dbReference type="GO" id="GO:0008171">
    <property type="term" value="F:O-methyltransferase activity"/>
    <property type="evidence" value="ECO:0007669"/>
    <property type="project" value="InterPro"/>
</dbReference>
<dbReference type="GO" id="GO:0046983">
    <property type="term" value="F:protein dimerization activity"/>
    <property type="evidence" value="ECO:0007669"/>
    <property type="project" value="InterPro"/>
</dbReference>
<dbReference type="GO" id="GO:0032259">
    <property type="term" value="P:methylation"/>
    <property type="evidence" value="ECO:0007669"/>
    <property type="project" value="UniProtKB-KW"/>
</dbReference>
<dbReference type="FunFam" id="1.10.10.10:FF:000357">
    <property type="entry name" value="Caffeic acid 3-O-methyltransferase"/>
    <property type="match status" value="1"/>
</dbReference>
<dbReference type="Gene3D" id="3.40.50.150">
    <property type="entry name" value="Vaccinia Virus protein VP39"/>
    <property type="match status" value="1"/>
</dbReference>
<dbReference type="Gene3D" id="1.10.10.10">
    <property type="entry name" value="Winged helix-like DNA-binding domain superfamily/Winged helix DNA-binding domain"/>
    <property type="match status" value="1"/>
</dbReference>
<dbReference type="InterPro" id="IPR016461">
    <property type="entry name" value="COMT-like"/>
</dbReference>
<dbReference type="InterPro" id="IPR001077">
    <property type="entry name" value="O_MeTrfase_dom"/>
</dbReference>
<dbReference type="InterPro" id="IPR012967">
    <property type="entry name" value="Plant_O-MeTrfase_dimerisation"/>
</dbReference>
<dbReference type="InterPro" id="IPR029063">
    <property type="entry name" value="SAM-dependent_MTases_sf"/>
</dbReference>
<dbReference type="InterPro" id="IPR036388">
    <property type="entry name" value="WH-like_DNA-bd_sf"/>
</dbReference>
<dbReference type="InterPro" id="IPR036390">
    <property type="entry name" value="WH_DNA-bd_sf"/>
</dbReference>
<dbReference type="PANTHER" id="PTHR11746">
    <property type="entry name" value="O-METHYLTRANSFERASE"/>
    <property type="match status" value="1"/>
</dbReference>
<dbReference type="Pfam" id="PF08100">
    <property type="entry name" value="Dimerisation"/>
    <property type="match status" value="1"/>
</dbReference>
<dbReference type="Pfam" id="PF00891">
    <property type="entry name" value="Methyltransf_2"/>
    <property type="match status" value="1"/>
</dbReference>
<dbReference type="PIRSF" id="PIRSF005739">
    <property type="entry name" value="O-mtase"/>
    <property type="match status" value="1"/>
</dbReference>
<dbReference type="SUPFAM" id="SSF53335">
    <property type="entry name" value="S-adenosyl-L-methionine-dependent methyltransferases"/>
    <property type="match status" value="1"/>
</dbReference>
<dbReference type="SUPFAM" id="SSF46785">
    <property type="entry name" value="Winged helix' DNA-binding domain"/>
    <property type="match status" value="1"/>
</dbReference>
<dbReference type="PROSITE" id="PS51683">
    <property type="entry name" value="SAM_OMT_II"/>
    <property type="match status" value="1"/>
</dbReference>
<accession>Q39522</accession>
<gene>
    <name type="primary">SMT</name>
</gene>
<organism>
    <name type="scientific">Coptis japonica</name>
    <name type="common">Japanese goldthread</name>
    <dbReference type="NCBI Taxonomy" id="3442"/>
    <lineage>
        <taxon>Eukaryota</taxon>
        <taxon>Viridiplantae</taxon>
        <taxon>Streptophyta</taxon>
        <taxon>Embryophyta</taxon>
        <taxon>Tracheophyta</taxon>
        <taxon>Spermatophyta</taxon>
        <taxon>Magnoliopsida</taxon>
        <taxon>Ranunculales</taxon>
        <taxon>Ranunculaceae</taxon>
        <taxon>Coptidoideae</taxon>
        <taxon>Coptis</taxon>
    </lineage>
</organism>
<keyword id="KW-0903">Direct protein sequencing</keyword>
<keyword id="KW-0489">Methyltransferase</keyword>
<keyword id="KW-0949">S-adenosyl-L-methionine</keyword>
<keyword id="KW-0808">Transferase</keyword>
<evidence type="ECO:0000255" key="1">
    <source>
        <dbReference type="PROSITE-ProRule" id="PRU01020"/>
    </source>
</evidence>
<sequence>MCTSLSELKCPVFSTKRKLLLEFALRTSVDMAAQEGVNYLSGLGLSRLICLPMALRAAIELNVFEIISQAGPDAQLSPSDIVAKIPTKNPSAAISLDRILRMLGASSILSVSTTKSGRVYGLNEESRCLVASEDKVSVVPMLLFTSDKAVVESFYNIKDVVLEEGVIPFDRTHGMDFFQYAGKEERVNKSFNQAMGAGSTIAFDEVFKVYKGFDNLKELVDVGGGIGTSLSNIVAKHPHIRGINFELPHVIGDAPDYPGVEHVPGDMFEGVPNAQNILLKWVLHDWDDDRSIKILKNCWKALPENGTVIVIEFVLPQVLGNNAESFNALTPDLLMMALNPGGKERTTIEFDGLAKAAGFAETKFFPISQGLHVMEFHKINC</sequence>
<protein>
    <recommendedName>
        <fullName>(S)-scoulerine 9-O-methyltransferase</fullName>
        <ecNumber>2.1.1.117</ecNumber>
    </recommendedName>
</protein>
<name>SMT_COPJA</name>
<reference key="1">
    <citation type="journal article" date="1995" name="Plant Cell Physiol.">
        <title>Molecular cloning and characterization of S-adenosyl-L-methionine:scoulerine 9-O-methyltransferase from cultured cells of Coptis japonica.</title>
        <authorList>
            <person name="Takeshita N."/>
            <person name="Fujiwara H."/>
            <person name="Mimura H."/>
            <person name="Fitchen J.H."/>
            <person name="Yamada Y."/>
            <person name="Sato F."/>
        </authorList>
    </citation>
    <scope>NUCLEOTIDE SEQUENCE [MRNA]</scope>
    <scope>PROTEIN SEQUENCE OF 89-96; 136-158; 160-183; 190-208; 212-236 AND 344-378</scope>
    <source>
        <strain>cv. dissecta</strain>
    </source>
</reference>
<comment type="function">
    <text>Produces a precursor of protoberberine alkaloids.</text>
</comment>
<comment type="catalytic activity">
    <reaction>
        <text>(S)-scoulerine + S-adenosyl-L-methionine = (S)-tetrahydrocolumbamine + S-adenosyl-L-homocysteine + H(+)</text>
        <dbReference type="Rhea" id="RHEA:23808"/>
        <dbReference type="ChEBI" id="CHEBI:15378"/>
        <dbReference type="ChEBI" id="CHEBI:17129"/>
        <dbReference type="ChEBI" id="CHEBI:17772"/>
        <dbReference type="ChEBI" id="CHEBI:57856"/>
        <dbReference type="ChEBI" id="CHEBI:59789"/>
        <dbReference type="EC" id="2.1.1.117"/>
    </reaction>
</comment>
<comment type="similarity">
    <text evidence="1">Belongs to the class I-like SAM-binding methyltransferase superfamily. Cation-independent O-methyltransferase family. COMT subfamily.</text>
</comment>
<feature type="chain" id="PRO_0000204431" description="(S)-scoulerine 9-O-methyltransferase">
    <location>
        <begin position="1"/>
        <end position="381"/>
    </location>
</feature>
<feature type="active site" description="Proton acceptor" evidence="1">
    <location>
        <position position="284"/>
    </location>
</feature>
<feature type="binding site" evidence="1">
    <location>
        <position position="223"/>
    </location>
    <ligand>
        <name>S-adenosyl-L-methionine</name>
        <dbReference type="ChEBI" id="CHEBI:59789"/>
    </ligand>
</feature>
<feature type="binding site" evidence="1">
    <location>
        <position position="246"/>
    </location>
    <ligand>
        <name>S-adenosyl-L-methionine</name>
        <dbReference type="ChEBI" id="CHEBI:59789"/>
    </ligand>
</feature>
<feature type="binding site" evidence="1">
    <location>
        <position position="266"/>
    </location>
    <ligand>
        <name>S-adenosyl-L-methionine</name>
        <dbReference type="ChEBI" id="CHEBI:59789"/>
    </ligand>
</feature>
<feature type="binding site" evidence="1">
    <location>
        <position position="267"/>
    </location>
    <ligand>
        <name>S-adenosyl-L-methionine</name>
        <dbReference type="ChEBI" id="CHEBI:59789"/>
    </ligand>
</feature>
<feature type="binding site" evidence="1">
    <location>
        <position position="280"/>
    </location>
    <ligand>
        <name>S-adenosyl-L-methionine</name>
        <dbReference type="ChEBI" id="CHEBI:59789"/>
    </ligand>
</feature>